<organism>
    <name type="scientific">Escherichia coli O6:H1 (strain CFT073 / ATCC 700928 / UPEC)</name>
    <dbReference type="NCBI Taxonomy" id="199310"/>
    <lineage>
        <taxon>Bacteria</taxon>
        <taxon>Pseudomonadati</taxon>
        <taxon>Pseudomonadota</taxon>
        <taxon>Gammaproteobacteria</taxon>
        <taxon>Enterobacterales</taxon>
        <taxon>Enterobacteriaceae</taxon>
        <taxon>Escherichia</taxon>
    </lineage>
</organism>
<feature type="chain" id="PRO_0000141587" description="Glutaredoxin 2">
    <location>
        <begin position="1"/>
        <end position="215"/>
    </location>
</feature>
<feature type="domain" description="GST N-terminal">
    <location>
        <begin position="1"/>
        <end position="77"/>
    </location>
</feature>
<feature type="disulfide bond" description="Redox-active" evidence="1">
    <location>
        <begin position="9"/>
        <end position="12"/>
    </location>
</feature>
<protein>
    <recommendedName>
        <fullName>Glutaredoxin 2</fullName>
        <shortName>Grx2</shortName>
    </recommendedName>
</protein>
<dbReference type="EMBL" id="AE014075">
    <property type="protein sequence ID" value="AAN79804.1"/>
    <property type="molecule type" value="Genomic_DNA"/>
</dbReference>
<dbReference type="RefSeq" id="WP_000780912.1">
    <property type="nucleotide sequence ID" value="NZ_CP051263.1"/>
</dbReference>
<dbReference type="BMRB" id="P0AC60"/>
<dbReference type="SMR" id="P0AC60"/>
<dbReference type="STRING" id="199310.c1331"/>
<dbReference type="GeneID" id="93776343"/>
<dbReference type="KEGG" id="ecc:c1331"/>
<dbReference type="eggNOG" id="COG2999">
    <property type="taxonomic scope" value="Bacteria"/>
</dbReference>
<dbReference type="HOGENOM" id="CLU_072939_0_1_6"/>
<dbReference type="BioCyc" id="ECOL199310:C1331-MONOMER"/>
<dbReference type="Proteomes" id="UP000001410">
    <property type="component" value="Chromosome"/>
</dbReference>
<dbReference type="GO" id="GO:0005829">
    <property type="term" value="C:cytosol"/>
    <property type="evidence" value="ECO:0007669"/>
    <property type="project" value="InterPro"/>
</dbReference>
<dbReference type="CDD" id="cd03199">
    <property type="entry name" value="GST_C_GRX2"/>
    <property type="match status" value="1"/>
</dbReference>
<dbReference type="CDD" id="cd03037">
    <property type="entry name" value="GST_N_GRX2"/>
    <property type="match status" value="1"/>
</dbReference>
<dbReference type="Gene3D" id="1.20.1050.10">
    <property type="match status" value="1"/>
</dbReference>
<dbReference type="Gene3D" id="3.40.30.10">
    <property type="entry name" value="Glutaredoxin"/>
    <property type="match status" value="1"/>
</dbReference>
<dbReference type="InterPro" id="IPR011767">
    <property type="entry name" value="GLR_AS"/>
</dbReference>
<dbReference type="InterPro" id="IPR007494">
    <property type="entry name" value="Glutaredoxin2_C"/>
</dbReference>
<dbReference type="InterPro" id="IPR036282">
    <property type="entry name" value="Glutathione-S-Trfase_C_sf"/>
</dbReference>
<dbReference type="InterPro" id="IPR004045">
    <property type="entry name" value="Glutathione_S-Trfase_N"/>
</dbReference>
<dbReference type="InterPro" id="IPR011901">
    <property type="entry name" value="Grx2"/>
</dbReference>
<dbReference type="InterPro" id="IPR036249">
    <property type="entry name" value="Thioredoxin-like_sf"/>
</dbReference>
<dbReference type="NCBIfam" id="TIGR02182">
    <property type="entry name" value="GRXB"/>
    <property type="match status" value="1"/>
</dbReference>
<dbReference type="NCBIfam" id="NF007702">
    <property type="entry name" value="PRK10387.1"/>
    <property type="match status" value="1"/>
</dbReference>
<dbReference type="Pfam" id="PF04399">
    <property type="entry name" value="Glutaredoxin2_C"/>
    <property type="match status" value="1"/>
</dbReference>
<dbReference type="Pfam" id="PF13417">
    <property type="entry name" value="GST_N_3"/>
    <property type="match status" value="1"/>
</dbReference>
<dbReference type="SFLD" id="SFLDG01183">
    <property type="entry name" value="Grx2-like"/>
    <property type="match status" value="1"/>
</dbReference>
<dbReference type="SFLD" id="SFLDG01204">
    <property type="entry name" value="Grx2-like.1"/>
    <property type="match status" value="1"/>
</dbReference>
<dbReference type="SUPFAM" id="SSF47616">
    <property type="entry name" value="GST C-terminal domain-like"/>
    <property type="match status" value="1"/>
</dbReference>
<dbReference type="SUPFAM" id="SSF52833">
    <property type="entry name" value="Thioredoxin-like"/>
    <property type="match status" value="1"/>
</dbReference>
<dbReference type="PROSITE" id="PS00195">
    <property type="entry name" value="GLUTAREDOXIN_1"/>
    <property type="match status" value="1"/>
</dbReference>
<dbReference type="PROSITE" id="PS50404">
    <property type="entry name" value="GST_NTER"/>
    <property type="match status" value="1"/>
</dbReference>
<keyword id="KW-1015">Disulfide bond</keyword>
<keyword id="KW-0249">Electron transport</keyword>
<keyword id="KW-0676">Redox-active center</keyword>
<keyword id="KW-1185">Reference proteome</keyword>
<keyword id="KW-0813">Transport</keyword>
<evidence type="ECO:0000250" key="1"/>
<evidence type="ECO:0000305" key="2"/>
<gene>
    <name type="primary">grxB</name>
    <name type="ordered locus">c1331</name>
</gene>
<comment type="function">
    <text evidence="1">Involved in reducing some disulfides in a coupled system with glutathione reductase. Does not act as hydrogen donor for ribonucleotide reductase (By similarity).</text>
</comment>
<comment type="similarity">
    <text evidence="2">Belongs to the glutaredoxin family.</text>
</comment>
<sequence>MKLYIYDHCPYCLKARMIFGLKNIPVELHVLLNDDAETPTRMVGQKQVPILQKDDSRYMPESMDIVHYVDKLDGKPLLTGKRSPAIEEWLRKVNGYANKLLLPRFAKSAFDEFSTPAARKYFVDKKEASAGNFADLLAHSDGLIKNISDDLRALDKLIVKPNAVNGELSEDDIQLFPLLRNLTLVAGINWPSRVADYRDNMAKQTQINLLSSMAI</sequence>
<name>GLRX2_ECOL6</name>
<reference key="1">
    <citation type="journal article" date="2002" name="Proc. Natl. Acad. Sci. U.S.A.">
        <title>Extensive mosaic structure revealed by the complete genome sequence of uropathogenic Escherichia coli.</title>
        <authorList>
            <person name="Welch R.A."/>
            <person name="Burland V."/>
            <person name="Plunkett G. III"/>
            <person name="Redford P."/>
            <person name="Roesch P."/>
            <person name="Rasko D."/>
            <person name="Buckles E.L."/>
            <person name="Liou S.-R."/>
            <person name="Boutin A."/>
            <person name="Hackett J."/>
            <person name="Stroud D."/>
            <person name="Mayhew G.F."/>
            <person name="Rose D.J."/>
            <person name="Zhou S."/>
            <person name="Schwartz D.C."/>
            <person name="Perna N.T."/>
            <person name="Mobley H.L.T."/>
            <person name="Donnenberg M.S."/>
            <person name="Blattner F.R."/>
        </authorList>
    </citation>
    <scope>NUCLEOTIDE SEQUENCE [LARGE SCALE GENOMIC DNA]</scope>
    <source>
        <strain>CFT073 / ATCC 700928 / UPEC</strain>
    </source>
</reference>
<accession>P0AC60</accession>
<accession>P39811</accession>
<accession>P75928</accession>
<accession>P77043</accession>
<proteinExistence type="inferred from homology"/>